<reference key="1">
    <citation type="submission" date="2003-01" db="EMBL/GenBank/DDBJ databases">
        <title>Chloroplast DNA phylogeny of tribe Heliantheae (Asteraceae).</title>
        <authorList>
            <person name="Panero J.L."/>
            <person name="Baldwin B.G."/>
            <person name="Schilling E.E."/>
            <person name="Clevinger J.A."/>
        </authorList>
    </citation>
    <scope>NUCLEOTIDE SEQUENCE [GENOMIC DNA]</scope>
</reference>
<accession>Q8HVP9</accession>
<dbReference type="EC" id="7.1.1.-" evidence="1"/>
<dbReference type="EMBL" id="AF383812">
    <property type="protein sequence ID" value="AAN61755.1"/>
    <property type="molecule type" value="Genomic_DNA"/>
</dbReference>
<dbReference type="SMR" id="Q8HVP9"/>
<dbReference type="GO" id="GO:0009535">
    <property type="term" value="C:chloroplast thylakoid membrane"/>
    <property type="evidence" value="ECO:0007669"/>
    <property type="project" value="UniProtKB-SubCell"/>
</dbReference>
<dbReference type="GO" id="GO:0051539">
    <property type="term" value="F:4 iron, 4 sulfur cluster binding"/>
    <property type="evidence" value="ECO:0007669"/>
    <property type="project" value="UniProtKB-KW"/>
</dbReference>
<dbReference type="GO" id="GO:0005506">
    <property type="term" value="F:iron ion binding"/>
    <property type="evidence" value="ECO:0007669"/>
    <property type="project" value="UniProtKB-UniRule"/>
</dbReference>
<dbReference type="GO" id="GO:0008137">
    <property type="term" value="F:NADH dehydrogenase (ubiquinone) activity"/>
    <property type="evidence" value="ECO:0007669"/>
    <property type="project" value="InterPro"/>
</dbReference>
<dbReference type="GO" id="GO:0048038">
    <property type="term" value="F:quinone binding"/>
    <property type="evidence" value="ECO:0007669"/>
    <property type="project" value="UniProtKB-KW"/>
</dbReference>
<dbReference type="GO" id="GO:0019684">
    <property type="term" value="P:photosynthesis, light reaction"/>
    <property type="evidence" value="ECO:0007669"/>
    <property type="project" value="UniProtKB-UniRule"/>
</dbReference>
<dbReference type="FunFam" id="3.30.70.3270:FF:000006">
    <property type="entry name" value="NAD(P)H-quinone oxidoreductase subunit I, chloroplastic"/>
    <property type="match status" value="1"/>
</dbReference>
<dbReference type="Gene3D" id="3.30.70.3270">
    <property type="match status" value="1"/>
</dbReference>
<dbReference type="HAMAP" id="MF_01351">
    <property type="entry name" value="NDH1_NuoI"/>
    <property type="match status" value="1"/>
</dbReference>
<dbReference type="InterPro" id="IPR017896">
    <property type="entry name" value="4Fe4S_Fe-S-bd"/>
</dbReference>
<dbReference type="InterPro" id="IPR017900">
    <property type="entry name" value="4Fe4S_Fe_S_CS"/>
</dbReference>
<dbReference type="InterPro" id="IPR010226">
    <property type="entry name" value="NADH_quinone_OxRdtase_chainI"/>
</dbReference>
<dbReference type="InterPro" id="IPR004497">
    <property type="entry name" value="NDHI"/>
</dbReference>
<dbReference type="NCBIfam" id="TIGR00403">
    <property type="entry name" value="ndhI"/>
    <property type="match status" value="1"/>
</dbReference>
<dbReference type="NCBIfam" id="TIGR01971">
    <property type="entry name" value="NuoI"/>
    <property type="match status" value="1"/>
</dbReference>
<dbReference type="NCBIfam" id="NF004537">
    <property type="entry name" value="PRK05888.1-3"/>
    <property type="match status" value="1"/>
</dbReference>
<dbReference type="PANTHER" id="PTHR47275">
    <property type="entry name" value="NAD(P)H-QUINONE OXIDOREDUCTASE SUBUNIT I, CHLOROPLASTIC"/>
    <property type="match status" value="1"/>
</dbReference>
<dbReference type="PANTHER" id="PTHR47275:SF1">
    <property type="entry name" value="NAD(P)H-QUINONE OXIDOREDUCTASE SUBUNIT I, CHLOROPLASTIC"/>
    <property type="match status" value="1"/>
</dbReference>
<dbReference type="Pfam" id="PF00037">
    <property type="entry name" value="Fer4"/>
    <property type="match status" value="2"/>
</dbReference>
<dbReference type="SUPFAM" id="SSF54862">
    <property type="entry name" value="4Fe-4S ferredoxins"/>
    <property type="match status" value="1"/>
</dbReference>
<dbReference type="PROSITE" id="PS00198">
    <property type="entry name" value="4FE4S_FER_1"/>
    <property type="match status" value="2"/>
</dbReference>
<dbReference type="PROSITE" id="PS51379">
    <property type="entry name" value="4FE4S_FER_2"/>
    <property type="match status" value="2"/>
</dbReference>
<geneLocation type="chloroplast"/>
<name>NDHI_MELIE</name>
<evidence type="ECO:0000255" key="1">
    <source>
        <dbReference type="HAMAP-Rule" id="MF_01351"/>
    </source>
</evidence>
<comment type="function">
    <text evidence="1">NDH shuttles electrons from NAD(P)H:plastoquinone, via FMN and iron-sulfur (Fe-S) centers, to quinones in the photosynthetic chain and possibly in a chloroplast respiratory chain. The immediate electron acceptor for the enzyme in this species is believed to be plastoquinone. Couples the redox reaction to proton translocation, and thus conserves the redox energy in a proton gradient.</text>
</comment>
<comment type="catalytic activity">
    <reaction evidence="1">
        <text>a plastoquinone + NADH + (n+1) H(+)(in) = a plastoquinol + NAD(+) + n H(+)(out)</text>
        <dbReference type="Rhea" id="RHEA:42608"/>
        <dbReference type="Rhea" id="RHEA-COMP:9561"/>
        <dbReference type="Rhea" id="RHEA-COMP:9562"/>
        <dbReference type="ChEBI" id="CHEBI:15378"/>
        <dbReference type="ChEBI" id="CHEBI:17757"/>
        <dbReference type="ChEBI" id="CHEBI:57540"/>
        <dbReference type="ChEBI" id="CHEBI:57945"/>
        <dbReference type="ChEBI" id="CHEBI:62192"/>
    </reaction>
</comment>
<comment type="catalytic activity">
    <reaction evidence="1">
        <text>a plastoquinone + NADPH + (n+1) H(+)(in) = a plastoquinol + NADP(+) + n H(+)(out)</text>
        <dbReference type="Rhea" id="RHEA:42612"/>
        <dbReference type="Rhea" id="RHEA-COMP:9561"/>
        <dbReference type="Rhea" id="RHEA-COMP:9562"/>
        <dbReference type="ChEBI" id="CHEBI:15378"/>
        <dbReference type="ChEBI" id="CHEBI:17757"/>
        <dbReference type="ChEBI" id="CHEBI:57783"/>
        <dbReference type="ChEBI" id="CHEBI:58349"/>
        <dbReference type="ChEBI" id="CHEBI:62192"/>
    </reaction>
</comment>
<comment type="cofactor">
    <cofactor evidence="1">
        <name>[4Fe-4S] cluster</name>
        <dbReference type="ChEBI" id="CHEBI:49883"/>
    </cofactor>
    <text evidence="1">Binds 2 [4Fe-4S] clusters per subunit.</text>
</comment>
<comment type="subunit">
    <text evidence="1">NDH is composed of at least 16 different subunits, 5 of which are encoded in the nucleus.</text>
</comment>
<comment type="subcellular location">
    <subcellularLocation>
        <location evidence="1">Plastid</location>
        <location evidence="1">Chloroplast thylakoid membrane</location>
        <topology evidence="1">Peripheral membrane protein</topology>
    </subcellularLocation>
</comment>
<comment type="similarity">
    <text evidence="1">Belongs to the complex I 23 kDa subunit family.</text>
</comment>
<sequence>MFPMVTEFMNYGQQTIRAARYIGQGFMITLSHANRLPVTIQYPYEKLITSERFRGRIHFEFDKCIACEVCVRVCPIDLPVVDWKLETDIRKKRLLNYSIDFGICIFCGNCVEYCPTNCLSMTEEYELSTYDRHELNYNQIALGRLPMSIIDDYTIRTILNLPEIKT</sequence>
<keyword id="KW-0004">4Fe-4S</keyword>
<keyword id="KW-0150">Chloroplast</keyword>
<keyword id="KW-0408">Iron</keyword>
<keyword id="KW-0411">Iron-sulfur</keyword>
<keyword id="KW-0472">Membrane</keyword>
<keyword id="KW-0479">Metal-binding</keyword>
<keyword id="KW-0520">NAD</keyword>
<keyword id="KW-0521">NADP</keyword>
<keyword id="KW-0934">Plastid</keyword>
<keyword id="KW-0618">Plastoquinone</keyword>
<keyword id="KW-0874">Quinone</keyword>
<keyword id="KW-0677">Repeat</keyword>
<keyword id="KW-0793">Thylakoid</keyword>
<keyword id="KW-1278">Translocase</keyword>
<organism>
    <name type="scientific">Melanthera integrifolia</name>
    <name type="common">Kure atoll nehe</name>
    <name type="synonym">Lipochaeta integrifolia</name>
    <dbReference type="NCBI Taxonomy" id="2596874"/>
    <lineage>
        <taxon>Eukaryota</taxon>
        <taxon>Viridiplantae</taxon>
        <taxon>Streptophyta</taxon>
        <taxon>Embryophyta</taxon>
        <taxon>Tracheophyta</taxon>
        <taxon>Spermatophyta</taxon>
        <taxon>Magnoliopsida</taxon>
        <taxon>eudicotyledons</taxon>
        <taxon>Gunneridae</taxon>
        <taxon>Pentapetalae</taxon>
        <taxon>asterids</taxon>
        <taxon>campanulids</taxon>
        <taxon>Asterales</taxon>
        <taxon>Asteraceae</taxon>
        <taxon>Asteroideae</taxon>
        <taxon>Heliantheae alliance</taxon>
        <taxon>Heliantheae</taxon>
        <taxon>Melanthera</taxon>
    </lineage>
</organism>
<protein>
    <recommendedName>
        <fullName evidence="1">NAD(P)H-quinone oxidoreductase subunit I, chloroplastic</fullName>
        <ecNumber evidence="1">7.1.1.-</ecNumber>
    </recommendedName>
    <alternativeName>
        <fullName evidence="1">NAD(P)H dehydrogenase subunit I</fullName>
        <shortName evidence="1">NDH subunit I</shortName>
    </alternativeName>
    <alternativeName>
        <fullName evidence="1">NADH-plastoquinone oxidoreductase subunit I</fullName>
    </alternativeName>
</protein>
<proteinExistence type="inferred from homology"/>
<feature type="chain" id="PRO_0000250810" description="NAD(P)H-quinone oxidoreductase subunit I, chloroplastic">
    <location>
        <begin position="1"/>
        <end position="166"/>
    </location>
</feature>
<feature type="domain" description="4Fe-4S ferredoxin-type 1" evidence="1">
    <location>
        <begin position="55"/>
        <end position="84"/>
    </location>
</feature>
<feature type="domain" description="4Fe-4S ferredoxin-type 2" evidence="1">
    <location>
        <begin position="95"/>
        <end position="124"/>
    </location>
</feature>
<feature type="binding site" evidence="1">
    <location>
        <position position="64"/>
    </location>
    <ligand>
        <name>[4Fe-4S] cluster</name>
        <dbReference type="ChEBI" id="CHEBI:49883"/>
        <label>1</label>
    </ligand>
</feature>
<feature type="binding site" evidence="1">
    <location>
        <position position="67"/>
    </location>
    <ligand>
        <name>[4Fe-4S] cluster</name>
        <dbReference type="ChEBI" id="CHEBI:49883"/>
        <label>1</label>
    </ligand>
</feature>
<feature type="binding site" evidence="1">
    <location>
        <position position="70"/>
    </location>
    <ligand>
        <name>[4Fe-4S] cluster</name>
        <dbReference type="ChEBI" id="CHEBI:49883"/>
        <label>1</label>
    </ligand>
</feature>
<feature type="binding site" evidence="1">
    <location>
        <position position="74"/>
    </location>
    <ligand>
        <name>[4Fe-4S] cluster</name>
        <dbReference type="ChEBI" id="CHEBI:49883"/>
        <label>2</label>
    </ligand>
</feature>
<feature type="binding site" evidence="1">
    <location>
        <position position="104"/>
    </location>
    <ligand>
        <name>[4Fe-4S] cluster</name>
        <dbReference type="ChEBI" id="CHEBI:49883"/>
        <label>2</label>
    </ligand>
</feature>
<feature type="binding site" evidence="1">
    <location>
        <position position="107"/>
    </location>
    <ligand>
        <name>[4Fe-4S] cluster</name>
        <dbReference type="ChEBI" id="CHEBI:49883"/>
        <label>2</label>
    </ligand>
</feature>
<feature type="binding site" evidence="1">
    <location>
        <position position="110"/>
    </location>
    <ligand>
        <name>[4Fe-4S] cluster</name>
        <dbReference type="ChEBI" id="CHEBI:49883"/>
        <label>2</label>
    </ligand>
</feature>
<feature type="binding site" evidence="1">
    <location>
        <position position="114"/>
    </location>
    <ligand>
        <name>[4Fe-4S] cluster</name>
        <dbReference type="ChEBI" id="CHEBI:49883"/>
        <label>1</label>
    </ligand>
</feature>
<gene>
    <name evidence="1" type="primary">ndhI</name>
</gene>